<proteinExistence type="evidence at transcript level"/>
<feature type="signal peptide" evidence="2">
    <location>
        <begin position="1"/>
        <end position="22"/>
    </location>
</feature>
<feature type="propeptide" id="PRO_0000003783" evidence="2">
    <location>
        <begin position="23"/>
        <end position="54"/>
    </location>
</feature>
<feature type="chain" id="PRO_0000003784" description="Cadherin-10">
    <location>
        <begin position="55"/>
        <end position="789"/>
    </location>
</feature>
<feature type="topological domain" description="Extracellular" evidence="2">
    <location>
        <begin position="55"/>
        <end position="606"/>
    </location>
</feature>
<feature type="transmembrane region" description="Helical" evidence="2">
    <location>
        <begin position="607"/>
        <end position="634"/>
    </location>
</feature>
<feature type="topological domain" description="Cytoplasmic" evidence="2">
    <location>
        <begin position="635"/>
        <end position="789"/>
    </location>
</feature>
<feature type="domain" description="Cadherin 1" evidence="3">
    <location>
        <begin position="55"/>
        <end position="160"/>
    </location>
</feature>
<feature type="domain" description="Cadherin 2" evidence="3">
    <location>
        <begin position="161"/>
        <end position="269"/>
    </location>
</feature>
<feature type="domain" description="Cadherin 3" evidence="3">
    <location>
        <begin position="270"/>
        <end position="384"/>
    </location>
</feature>
<feature type="domain" description="Cadherin 4" evidence="3">
    <location>
        <begin position="385"/>
        <end position="487"/>
    </location>
</feature>
<feature type="domain" description="Cadherin 5" evidence="3">
    <location>
        <begin position="488"/>
        <end position="606"/>
    </location>
</feature>
<feature type="glycosylation site" description="N-linked (GlcNAc...) asparagine" evidence="2">
    <location>
        <position position="256"/>
    </location>
</feature>
<feature type="glycosylation site" description="N-linked (GlcNAc...) asparagine" evidence="2">
    <location>
        <position position="438"/>
    </location>
</feature>
<feature type="glycosylation site" description="N-linked (GlcNAc...) asparagine" evidence="2">
    <location>
        <position position="456"/>
    </location>
</feature>
<feature type="glycosylation site" description="N-linked (GlcNAc...) asparagine" evidence="2">
    <location>
        <position position="534"/>
    </location>
</feature>
<sequence length="789" mass="88392">MTIQQVLLLLLLWMWLLHPCRTEMLFRRTPDLRPKGFVGRTSGSDGKALHRQKRGWMWNQFFLLEEYTGSDYQYVGKLHSDQDKGDGSLKYILSGDGAGTLFIIDEKTGDIHATRRIDREEKAFYTLRAQAINRRTLRPVEPESEFVIKIHDINDNEPTFPEEIYTASVPEMSVVGTSVVQVTATDADDPSYGNSARIIYSILQGQPYFSVEPETGIIRTALPNMNRENREQYQVVIQAKDMGGQMGGLSGTTTVNITLTDVNDNPPRFPQSTIHLRIPESSPVGTPIGSIKATDADTGKNAEVEYRIIDGDGTDMFDIVTQRDTQEGIITVRKPLDYETRRLYTLKVEAENTHVDPRFYYLGPFKDTTIVKISVEDVDEPPVFSRSSYLFEVHEDIELGTIIGTVMARDPDSASSPIRFSLDRHTDLDRIFNIHSGNGSIYTSKPLDREISQWHNLSVIAAEINNLKDTTRVPVYVRILDVNDNAPQFAVFYDTFVCENARAGQLIQTISAVDKDDPLGGQKFFFSLAAVNPNFTVQDNEDNTARILTRRNGFSRHEISTYLLPVVISDNDYPIQSSTGTLTIRVCACDSRGNMQSCNAEALLLPAGLSTGALIAILLCIIILLVIVVLFAALKRQRKKEPLILSKEDIRDNIVSYNDEGGGEEDTQAFDIGTLRNPAAIEDKKLRRDIIPETLFVPRRTPSAPDNTDVRDFINQRLKEHDSDPSAPPYDSLATYAYEGNDSIAESLSSLESGTTEGDQNYDYLREWGPRFNKLAEMYGGGESDKDAS</sequence>
<gene>
    <name type="primary">CDH10</name>
</gene>
<protein>
    <recommendedName>
        <fullName>Cadherin-10</fullName>
    </recommendedName>
</protein>
<comment type="function">
    <text>Cadherins are calcium-dependent cell adhesion proteins. They preferentially interact with themselves in a homophilic manner in connecting cells; cadherins may thus contribute to the sorting of heterogeneous cell types.</text>
</comment>
<comment type="subcellular location">
    <subcellularLocation>
        <location>Cell membrane</location>
        <topology>Single-pass type I membrane protein</topology>
    </subcellularLocation>
</comment>
<comment type="domain">
    <text evidence="1">Three calcium ions are usually bound at the interface of each cadherin domain and rigidify the connections, imparting a strong curvature to the full-length ectodomain.</text>
</comment>
<evidence type="ECO:0000250" key="1"/>
<evidence type="ECO:0000255" key="2"/>
<evidence type="ECO:0000255" key="3">
    <source>
        <dbReference type="PROSITE-ProRule" id="PRU00043"/>
    </source>
</evidence>
<dbReference type="EMBL" id="AB000512">
    <property type="protein sequence ID" value="BAA19130.1"/>
    <property type="molecule type" value="mRNA"/>
</dbReference>
<dbReference type="RefSeq" id="NP_999838.1">
    <property type="nucleotide sequence ID" value="NM_214673.1"/>
</dbReference>
<dbReference type="RefSeq" id="XP_015137653.2">
    <property type="nucleotide sequence ID" value="XM_015282167.4"/>
</dbReference>
<dbReference type="RefSeq" id="XP_046775481.1">
    <property type="nucleotide sequence ID" value="XM_046919525.1"/>
</dbReference>
<dbReference type="RefSeq" id="XP_046775485.1">
    <property type="nucleotide sequence ID" value="XM_046919529.1"/>
</dbReference>
<dbReference type="RefSeq" id="XP_046775488.1">
    <property type="nucleotide sequence ID" value="XM_046919532.1"/>
</dbReference>
<dbReference type="SMR" id="P79995"/>
<dbReference type="FunCoup" id="P79995">
    <property type="interactions" value="65"/>
</dbReference>
<dbReference type="STRING" id="9031.ENSGALP00000058160"/>
<dbReference type="GlyCosmos" id="P79995">
    <property type="glycosylation" value="4 sites, No reported glycans"/>
</dbReference>
<dbReference type="GlyGen" id="P79995">
    <property type="glycosylation" value="4 sites"/>
</dbReference>
<dbReference type="PaxDb" id="9031-ENSGALP00000021052"/>
<dbReference type="Ensembl" id="ENSGALT00010001632.1">
    <property type="protein sequence ID" value="ENSGALP00010000891.1"/>
    <property type="gene ID" value="ENSGALG00010000760.1"/>
</dbReference>
<dbReference type="GeneID" id="408049"/>
<dbReference type="KEGG" id="gga:408049"/>
<dbReference type="CTD" id="1008"/>
<dbReference type="VEuPathDB" id="HostDB:geneid_408049"/>
<dbReference type="eggNOG" id="KOG3594">
    <property type="taxonomic scope" value="Eukaryota"/>
</dbReference>
<dbReference type="GeneTree" id="ENSGT00940000154187"/>
<dbReference type="InParanoid" id="P79995"/>
<dbReference type="OMA" id="CSPEITF"/>
<dbReference type="OrthoDB" id="6252479at2759"/>
<dbReference type="PhylomeDB" id="P79995"/>
<dbReference type="PRO" id="PR:P79995"/>
<dbReference type="Proteomes" id="UP000000539">
    <property type="component" value="Chromosome 2"/>
</dbReference>
<dbReference type="GO" id="GO:0005912">
    <property type="term" value="C:adherens junction"/>
    <property type="evidence" value="ECO:0000318"/>
    <property type="project" value="GO_Central"/>
</dbReference>
<dbReference type="GO" id="GO:0016342">
    <property type="term" value="C:catenin complex"/>
    <property type="evidence" value="ECO:0000318"/>
    <property type="project" value="GO_Central"/>
</dbReference>
<dbReference type="GO" id="GO:0098978">
    <property type="term" value="C:glutamatergic synapse"/>
    <property type="evidence" value="ECO:0007669"/>
    <property type="project" value="Ensembl"/>
</dbReference>
<dbReference type="GO" id="GO:0008013">
    <property type="term" value="F:beta-catenin binding"/>
    <property type="evidence" value="ECO:0000318"/>
    <property type="project" value="GO_Central"/>
</dbReference>
<dbReference type="GO" id="GO:0045296">
    <property type="term" value="F:cadherin binding"/>
    <property type="evidence" value="ECO:0000318"/>
    <property type="project" value="GO_Central"/>
</dbReference>
<dbReference type="GO" id="GO:0005509">
    <property type="term" value="F:calcium ion binding"/>
    <property type="evidence" value="ECO:0007669"/>
    <property type="project" value="InterPro"/>
</dbReference>
<dbReference type="GO" id="GO:0034332">
    <property type="term" value="P:adherens junction organization"/>
    <property type="evidence" value="ECO:0000318"/>
    <property type="project" value="GO_Central"/>
</dbReference>
<dbReference type="GO" id="GO:0016339">
    <property type="term" value="P:calcium-dependent cell-cell adhesion via plasma membrane cell adhesion molecules"/>
    <property type="evidence" value="ECO:0000318"/>
    <property type="project" value="GO_Central"/>
</dbReference>
<dbReference type="GO" id="GO:0016477">
    <property type="term" value="P:cell migration"/>
    <property type="evidence" value="ECO:0000318"/>
    <property type="project" value="GO_Central"/>
</dbReference>
<dbReference type="GO" id="GO:0000902">
    <property type="term" value="P:cell morphogenesis"/>
    <property type="evidence" value="ECO:0000318"/>
    <property type="project" value="GO_Central"/>
</dbReference>
<dbReference type="GO" id="GO:0044331">
    <property type="term" value="P:cell-cell adhesion mediated by cadherin"/>
    <property type="evidence" value="ECO:0000318"/>
    <property type="project" value="GO_Central"/>
</dbReference>
<dbReference type="GO" id="GO:0007043">
    <property type="term" value="P:cell-cell junction assembly"/>
    <property type="evidence" value="ECO:0000318"/>
    <property type="project" value="GO_Central"/>
</dbReference>
<dbReference type="GO" id="GO:0007156">
    <property type="term" value="P:homophilic cell adhesion via plasma membrane adhesion molecules"/>
    <property type="evidence" value="ECO:0007669"/>
    <property type="project" value="InterPro"/>
</dbReference>
<dbReference type="GO" id="GO:0099560">
    <property type="term" value="P:synaptic membrane adhesion"/>
    <property type="evidence" value="ECO:0000318"/>
    <property type="project" value="GO_Central"/>
</dbReference>
<dbReference type="CDD" id="cd11304">
    <property type="entry name" value="Cadherin_repeat"/>
    <property type="match status" value="5"/>
</dbReference>
<dbReference type="FunFam" id="2.60.40.60:FF:000008">
    <property type="entry name" value="Cadherin 24"/>
    <property type="match status" value="1"/>
</dbReference>
<dbReference type="FunFam" id="2.60.40.60:FF:000009">
    <property type="entry name" value="Cadherin 24"/>
    <property type="match status" value="1"/>
</dbReference>
<dbReference type="FunFam" id="2.60.40.60:FF:000012">
    <property type="entry name" value="Cadherin 24"/>
    <property type="match status" value="1"/>
</dbReference>
<dbReference type="FunFam" id="2.60.40.60:FF:000017">
    <property type="entry name" value="Cadherin 24"/>
    <property type="match status" value="1"/>
</dbReference>
<dbReference type="FunFam" id="2.60.40.60:FF:000014">
    <property type="entry name" value="Cadherin 8"/>
    <property type="match status" value="1"/>
</dbReference>
<dbReference type="FunFam" id="4.10.900.10:FF:000006">
    <property type="entry name" value="Cadherin-9 preproprotein"/>
    <property type="match status" value="1"/>
</dbReference>
<dbReference type="Gene3D" id="2.60.40.60">
    <property type="entry name" value="Cadherins"/>
    <property type="match status" value="5"/>
</dbReference>
<dbReference type="Gene3D" id="4.10.900.10">
    <property type="entry name" value="TCF3-CBD (Catenin binding domain)"/>
    <property type="match status" value="1"/>
</dbReference>
<dbReference type="InterPro" id="IPR039808">
    <property type="entry name" value="Cadherin"/>
</dbReference>
<dbReference type="InterPro" id="IPR002126">
    <property type="entry name" value="Cadherin-like_dom"/>
</dbReference>
<dbReference type="InterPro" id="IPR015919">
    <property type="entry name" value="Cadherin-like_sf"/>
</dbReference>
<dbReference type="InterPro" id="IPR020894">
    <property type="entry name" value="Cadherin_CS"/>
</dbReference>
<dbReference type="InterPro" id="IPR000233">
    <property type="entry name" value="Cadherin_Y-type_LIR"/>
</dbReference>
<dbReference type="InterPro" id="IPR027397">
    <property type="entry name" value="Catenin-bd_sf"/>
</dbReference>
<dbReference type="PANTHER" id="PTHR24027:SF290">
    <property type="entry name" value="CADHERIN-10"/>
    <property type="match status" value="1"/>
</dbReference>
<dbReference type="PANTHER" id="PTHR24027">
    <property type="entry name" value="CADHERIN-23"/>
    <property type="match status" value="1"/>
</dbReference>
<dbReference type="Pfam" id="PF01049">
    <property type="entry name" value="CADH_Y-type_LIR"/>
    <property type="match status" value="1"/>
</dbReference>
<dbReference type="Pfam" id="PF00028">
    <property type="entry name" value="Cadherin"/>
    <property type="match status" value="5"/>
</dbReference>
<dbReference type="PRINTS" id="PR00205">
    <property type="entry name" value="CADHERIN"/>
</dbReference>
<dbReference type="SMART" id="SM00112">
    <property type="entry name" value="CA"/>
    <property type="match status" value="5"/>
</dbReference>
<dbReference type="SUPFAM" id="SSF49313">
    <property type="entry name" value="Cadherin-like"/>
    <property type="match status" value="5"/>
</dbReference>
<dbReference type="PROSITE" id="PS00232">
    <property type="entry name" value="CADHERIN_1"/>
    <property type="match status" value="3"/>
</dbReference>
<dbReference type="PROSITE" id="PS50268">
    <property type="entry name" value="CADHERIN_2"/>
    <property type="match status" value="5"/>
</dbReference>
<name>CAD10_CHICK</name>
<accession>P79995</accession>
<reference key="1">
    <citation type="journal article" date="1997" name="Dev. Dyn.">
        <title>Cloning and expression analysis of cadherin-10 in the CNS of the chicken embryo.</title>
        <authorList>
            <person name="Fushimi D."/>
            <person name="Arndt K."/>
            <person name="Takeichi M."/>
            <person name="Redies C."/>
        </authorList>
    </citation>
    <scope>NUCLEOTIDE SEQUENCE [MRNA]</scope>
    <source>
        <tissue>Brain</tissue>
        <tissue>Retina</tissue>
    </source>
</reference>
<keyword id="KW-0106">Calcium</keyword>
<keyword id="KW-0130">Cell adhesion</keyword>
<keyword id="KW-1003">Cell membrane</keyword>
<keyword id="KW-0165">Cleavage on pair of basic residues</keyword>
<keyword id="KW-0325">Glycoprotein</keyword>
<keyword id="KW-0472">Membrane</keyword>
<keyword id="KW-0479">Metal-binding</keyword>
<keyword id="KW-1185">Reference proteome</keyword>
<keyword id="KW-0677">Repeat</keyword>
<keyword id="KW-0732">Signal</keyword>
<keyword id="KW-0812">Transmembrane</keyword>
<keyword id="KW-1133">Transmembrane helix</keyword>
<organism>
    <name type="scientific">Gallus gallus</name>
    <name type="common">Chicken</name>
    <dbReference type="NCBI Taxonomy" id="9031"/>
    <lineage>
        <taxon>Eukaryota</taxon>
        <taxon>Metazoa</taxon>
        <taxon>Chordata</taxon>
        <taxon>Craniata</taxon>
        <taxon>Vertebrata</taxon>
        <taxon>Euteleostomi</taxon>
        <taxon>Archelosauria</taxon>
        <taxon>Archosauria</taxon>
        <taxon>Dinosauria</taxon>
        <taxon>Saurischia</taxon>
        <taxon>Theropoda</taxon>
        <taxon>Coelurosauria</taxon>
        <taxon>Aves</taxon>
        <taxon>Neognathae</taxon>
        <taxon>Galloanserae</taxon>
        <taxon>Galliformes</taxon>
        <taxon>Phasianidae</taxon>
        <taxon>Phasianinae</taxon>
        <taxon>Gallus</taxon>
    </lineage>
</organism>